<reference key="1">
    <citation type="journal article" date="2005" name="Nature">
        <title>Genome sequencing and analysis of Aspergillus oryzae.</title>
        <authorList>
            <person name="Machida M."/>
            <person name="Asai K."/>
            <person name="Sano M."/>
            <person name="Tanaka T."/>
            <person name="Kumagai T."/>
            <person name="Terai G."/>
            <person name="Kusumoto K."/>
            <person name="Arima T."/>
            <person name="Akita O."/>
            <person name="Kashiwagi Y."/>
            <person name="Abe K."/>
            <person name="Gomi K."/>
            <person name="Horiuchi H."/>
            <person name="Kitamoto K."/>
            <person name="Kobayashi T."/>
            <person name="Takeuchi M."/>
            <person name="Denning D.W."/>
            <person name="Galagan J.E."/>
            <person name="Nierman W.C."/>
            <person name="Yu J."/>
            <person name="Archer D.B."/>
            <person name="Bennett J.W."/>
            <person name="Bhatnagar D."/>
            <person name="Cleveland T.E."/>
            <person name="Fedorova N.D."/>
            <person name="Gotoh O."/>
            <person name="Horikawa H."/>
            <person name="Hosoyama A."/>
            <person name="Ichinomiya M."/>
            <person name="Igarashi R."/>
            <person name="Iwashita K."/>
            <person name="Juvvadi P.R."/>
            <person name="Kato M."/>
            <person name="Kato Y."/>
            <person name="Kin T."/>
            <person name="Kokubun A."/>
            <person name="Maeda H."/>
            <person name="Maeyama N."/>
            <person name="Maruyama J."/>
            <person name="Nagasaki H."/>
            <person name="Nakajima T."/>
            <person name="Oda K."/>
            <person name="Okada K."/>
            <person name="Paulsen I."/>
            <person name="Sakamoto K."/>
            <person name="Sawano T."/>
            <person name="Takahashi M."/>
            <person name="Takase K."/>
            <person name="Terabayashi Y."/>
            <person name="Wortman J.R."/>
            <person name="Yamada O."/>
            <person name="Yamagata Y."/>
            <person name="Anazawa H."/>
            <person name="Hata Y."/>
            <person name="Koide Y."/>
            <person name="Komori T."/>
            <person name="Koyama Y."/>
            <person name="Minetoki T."/>
            <person name="Suharnan S."/>
            <person name="Tanaka A."/>
            <person name="Isono K."/>
            <person name="Kuhara S."/>
            <person name="Ogasawara N."/>
            <person name="Kikuchi H."/>
        </authorList>
    </citation>
    <scope>NUCLEOTIDE SEQUENCE [LARGE SCALE GENOMIC DNA]</scope>
    <source>
        <strain>ATCC 42149 / RIB 40</strain>
    </source>
</reference>
<reference key="2">
    <citation type="journal article" date="2021" name="Arch. Microbiol.">
        <title>Identification and characterization of a novel gene Aokap1 involved in growth and kojic acid synthesis in Aspergillus oryzae.</title>
        <authorList>
            <person name="Li Y."/>
            <person name="Zhang H."/>
            <person name="Chen Z."/>
            <person name="Fan J."/>
            <person name="Chen T."/>
            <person name="Zeng B."/>
            <person name="Zhang Z."/>
        </authorList>
    </citation>
    <scope>INDUCTION</scope>
    <scope>FUNCTION</scope>
    <scope>DISRUPTION PHENOTYPE</scope>
</reference>
<protein>
    <recommendedName>
        <fullName evidence="4">Kojic acid related protein 1</fullName>
    </recommendedName>
</protein>
<dbReference type="EMBL" id="BA000049">
    <property type="protein sequence ID" value="BAE54777.1"/>
    <property type="molecule type" value="Genomic_DNA"/>
</dbReference>
<dbReference type="STRING" id="510516.Q2UUI8"/>
<dbReference type="EnsemblFungi" id="BAE54777">
    <property type="protein sequence ID" value="BAE54777"/>
    <property type="gene ID" value="AO090009000298"/>
</dbReference>
<dbReference type="HOGENOM" id="CLU_065434_0_1_1"/>
<dbReference type="OMA" id="IASHNLY"/>
<dbReference type="Proteomes" id="UP000006564">
    <property type="component" value="Chromosome 1"/>
</dbReference>
<dbReference type="GO" id="GO:0016020">
    <property type="term" value="C:membrane"/>
    <property type="evidence" value="ECO:0007669"/>
    <property type="project" value="UniProtKB-SubCell"/>
</dbReference>
<proteinExistence type="evidence at transcript level"/>
<gene>
    <name evidence="4" type="primary">kap1</name>
    <name type="ORF">AO090009000298</name>
</gene>
<comment type="function">
    <text evidence="3">Involved in mycelium growth and repression of conidia formation by affecting the expression of brlA and abaA (PubMed:34950983). Acts as a negative regulation factor for kojic acid production through affecting the expression of kojA, kojR and kojT (PubMed:34950983).</text>
</comment>
<comment type="subcellular location">
    <subcellularLocation>
        <location evidence="1">Membrane</location>
        <topology evidence="1">Multi-pass membrane protein</topology>
    </subcellularLocation>
</comment>
<comment type="induction">
    <text evidence="3">Expression is increased during growth and development.</text>
</comment>
<comment type="disruption phenotype">
    <text evidence="3">Causes the inhibition in mycelium growth and induces conidia formation, corresponding with reduced expression of brlA and abaA (PubMed:34950983). Results in elevated production of kojic acid, via increased expression of kojA, kojR and kojT (PubMed:34950983).</text>
</comment>
<keyword id="KW-0472">Membrane</keyword>
<keyword id="KW-1185">Reference proteome</keyword>
<keyword id="KW-0812">Transmembrane</keyword>
<keyword id="KW-1133">Transmembrane helix</keyword>
<organism>
    <name type="scientific">Aspergillus oryzae (strain ATCC 42149 / RIB 40)</name>
    <name type="common">Yellow koji mold</name>
    <dbReference type="NCBI Taxonomy" id="510516"/>
    <lineage>
        <taxon>Eukaryota</taxon>
        <taxon>Fungi</taxon>
        <taxon>Dikarya</taxon>
        <taxon>Ascomycota</taxon>
        <taxon>Pezizomycotina</taxon>
        <taxon>Eurotiomycetes</taxon>
        <taxon>Eurotiomycetidae</taxon>
        <taxon>Eurotiales</taxon>
        <taxon>Aspergillaceae</taxon>
        <taxon>Aspergillus</taxon>
        <taxon>Aspergillus subgen. Circumdati</taxon>
    </lineage>
</organism>
<accession>Q2UUI8</accession>
<sequence>MEQIMASTVLPMRFSMLLRTIDPIKFLWSGALFLGVLSIFILITKLPVHILRIFYPPVSVFVHVGLFIVYIVSASYQAGSDKSDPKHLQSGPPWYITKSCSVASNKDNIGYCQQAKALFGFTIIIIVLYFVEIIVSVHSCFVTKEEKAERDELREEKRTMKEYEDMVLRTPRTFPMMSPALPSGGTTQMMPTMSSRSPEFSTFGHGSSDLPLRDHFSTPNPRPPAQQESSETLAPGNQPQMYFPPPPKKAAKV</sequence>
<name>KAP1_ASPOR</name>
<feature type="chain" id="PRO_0000458976" description="Kojic acid related protein 1">
    <location>
        <begin position="1"/>
        <end position="253"/>
    </location>
</feature>
<feature type="transmembrane region" description="Helical" evidence="1">
    <location>
        <begin position="23"/>
        <end position="43"/>
    </location>
</feature>
<feature type="transmembrane region" description="Helical" evidence="1">
    <location>
        <begin position="53"/>
        <end position="73"/>
    </location>
</feature>
<feature type="transmembrane region" description="Helical" evidence="1">
    <location>
        <begin position="117"/>
        <end position="137"/>
    </location>
</feature>
<feature type="region of interest" description="Disordered" evidence="2">
    <location>
        <begin position="174"/>
        <end position="253"/>
    </location>
</feature>
<feature type="compositionally biased region" description="Polar residues" evidence="2">
    <location>
        <begin position="184"/>
        <end position="200"/>
    </location>
</feature>
<feature type="compositionally biased region" description="Polar residues" evidence="2">
    <location>
        <begin position="226"/>
        <end position="240"/>
    </location>
</feature>
<feature type="compositionally biased region" description="Pro residues" evidence="2">
    <location>
        <begin position="242"/>
        <end position="253"/>
    </location>
</feature>
<evidence type="ECO:0000255" key="1"/>
<evidence type="ECO:0000256" key="2">
    <source>
        <dbReference type="SAM" id="MobiDB-lite"/>
    </source>
</evidence>
<evidence type="ECO:0000269" key="3">
    <source>
    </source>
</evidence>
<evidence type="ECO:0000303" key="4">
    <source>
    </source>
</evidence>